<name>SYY2_BACCZ</name>
<keyword id="KW-0030">Aminoacyl-tRNA synthetase</keyword>
<keyword id="KW-0067">ATP-binding</keyword>
<keyword id="KW-0963">Cytoplasm</keyword>
<keyword id="KW-0436">Ligase</keyword>
<keyword id="KW-0547">Nucleotide-binding</keyword>
<keyword id="KW-0648">Protein biosynthesis</keyword>
<keyword id="KW-0694">RNA-binding</keyword>
<proteinExistence type="inferred from homology"/>
<sequence length="419" mass="47377">MNIIDELEWRGAVNQQTDEEGLRKLVEEKKISLYCGVDPTGDSMHIGHLIPFMMMKRFQLAGHHPVILIGGATGTIGDPSGRQSERQLQTLEVVQHNVDALTAQMKKLFDFGGNSEVKMVNNYDWTHEINIIEFLRDYGKNFSINSMLAKDIVASRLDTGISFTEFTYQILQAMDFHHLYKKEDVQLQIGGSDQWGNITSGLDLIRKLEGHEAKVFGLTIPLLLKSDGTKFGKSAGGAVWLDPEKTTPFEFYQFWVNTDDRDVVKYLKYFTFLTKERIDELAVKVETEPHKREAQKVLAEEMTKFVHGEEALLQAVKITAALFSGDIKSLTADEIEQGFKEMPTFQSSKETKNIVEWLVDLGIEPSRRQAREDINNGAISMNGEKVTDVGTDVTVENSFDGRFIIIRKGKKNYSLVKLG</sequence>
<gene>
    <name evidence="1" type="primary">tyrS2</name>
    <name type="ordered locus">BCE33L4797</name>
</gene>
<protein>
    <recommendedName>
        <fullName evidence="1">Tyrosine--tRNA ligase 2</fullName>
        <ecNumber evidence="1">6.1.1.1</ecNumber>
    </recommendedName>
    <alternativeName>
        <fullName evidence="1">Tyrosyl-tRNA synthetase 2</fullName>
        <shortName evidence="1">TyrRS 2</shortName>
    </alternativeName>
</protein>
<accession>Q631P9</accession>
<organism>
    <name type="scientific">Bacillus cereus (strain ZK / E33L)</name>
    <dbReference type="NCBI Taxonomy" id="288681"/>
    <lineage>
        <taxon>Bacteria</taxon>
        <taxon>Bacillati</taxon>
        <taxon>Bacillota</taxon>
        <taxon>Bacilli</taxon>
        <taxon>Bacillales</taxon>
        <taxon>Bacillaceae</taxon>
        <taxon>Bacillus</taxon>
        <taxon>Bacillus cereus group</taxon>
    </lineage>
</organism>
<reference key="1">
    <citation type="journal article" date="2006" name="J. Bacteriol.">
        <title>Pathogenomic sequence analysis of Bacillus cereus and Bacillus thuringiensis isolates closely related to Bacillus anthracis.</title>
        <authorList>
            <person name="Han C.S."/>
            <person name="Xie G."/>
            <person name="Challacombe J.F."/>
            <person name="Altherr M.R."/>
            <person name="Bhotika S.S."/>
            <person name="Bruce D."/>
            <person name="Campbell C.S."/>
            <person name="Campbell M.L."/>
            <person name="Chen J."/>
            <person name="Chertkov O."/>
            <person name="Cleland C."/>
            <person name="Dimitrijevic M."/>
            <person name="Doggett N.A."/>
            <person name="Fawcett J.J."/>
            <person name="Glavina T."/>
            <person name="Goodwin L.A."/>
            <person name="Hill K.K."/>
            <person name="Hitchcock P."/>
            <person name="Jackson P.J."/>
            <person name="Keim P."/>
            <person name="Kewalramani A.R."/>
            <person name="Longmire J."/>
            <person name="Lucas S."/>
            <person name="Malfatti S."/>
            <person name="McMurry K."/>
            <person name="Meincke L.J."/>
            <person name="Misra M."/>
            <person name="Moseman B.L."/>
            <person name="Mundt M."/>
            <person name="Munk A.C."/>
            <person name="Okinaka R.T."/>
            <person name="Parson-Quintana B."/>
            <person name="Reilly L.P."/>
            <person name="Richardson P."/>
            <person name="Robinson D.L."/>
            <person name="Rubin E."/>
            <person name="Saunders E."/>
            <person name="Tapia R."/>
            <person name="Tesmer J.G."/>
            <person name="Thayer N."/>
            <person name="Thompson L.S."/>
            <person name="Tice H."/>
            <person name="Ticknor L.O."/>
            <person name="Wills P.L."/>
            <person name="Brettin T.S."/>
            <person name="Gilna P."/>
        </authorList>
    </citation>
    <scope>NUCLEOTIDE SEQUENCE [LARGE SCALE GENOMIC DNA]</scope>
    <source>
        <strain>ZK / E33L</strain>
    </source>
</reference>
<feature type="chain" id="PRO_0000234674" description="Tyrosine--tRNA ligase 2">
    <location>
        <begin position="1"/>
        <end position="419"/>
    </location>
</feature>
<feature type="domain" description="S4 RNA-binding" evidence="1">
    <location>
        <begin position="352"/>
        <end position="418"/>
    </location>
</feature>
<feature type="short sequence motif" description="'HIGH' region">
    <location>
        <begin position="39"/>
        <end position="48"/>
    </location>
</feature>
<feature type="short sequence motif" description="'KMSKS' region">
    <location>
        <begin position="230"/>
        <end position="234"/>
    </location>
</feature>
<feature type="binding site" evidence="1">
    <location>
        <position position="34"/>
    </location>
    <ligand>
        <name>L-tyrosine</name>
        <dbReference type="ChEBI" id="CHEBI:58315"/>
    </ligand>
</feature>
<feature type="binding site" evidence="1">
    <location>
        <position position="168"/>
    </location>
    <ligand>
        <name>L-tyrosine</name>
        <dbReference type="ChEBI" id="CHEBI:58315"/>
    </ligand>
</feature>
<feature type="binding site" evidence="1">
    <location>
        <position position="172"/>
    </location>
    <ligand>
        <name>L-tyrosine</name>
        <dbReference type="ChEBI" id="CHEBI:58315"/>
    </ligand>
</feature>
<feature type="binding site" evidence="1">
    <location>
        <position position="233"/>
    </location>
    <ligand>
        <name>ATP</name>
        <dbReference type="ChEBI" id="CHEBI:30616"/>
    </ligand>
</feature>
<evidence type="ECO:0000255" key="1">
    <source>
        <dbReference type="HAMAP-Rule" id="MF_02006"/>
    </source>
</evidence>
<comment type="function">
    <text evidence="1">Catalyzes the attachment of tyrosine to tRNA(Tyr) in a two-step reaction: tyrosine is first activated by ATP to form Tyr-AMP and then transferred to the acceptor end of tRNA(Tyr).</text>
</comment>
<comment type="catalytic activity">
    <reaction evidence="1">
        <text>tRNA(Tyr) + L-tyrosine + ATP = L-tyrosyl-tRNA(Tyr) + AMP + diphosphate + H(+)</text>
        <dbReference type="Rhea" id="RHEA:10220"/>
        <dbReference type="Rhea" id="RHEA-COMP:9706"/>
        <dbReference type="Rhea" id="RHEA-COMP:9707"/>
        <dbReference type="ChEBI" id="CHEBI:15378"/>
        <dbReference type="ChEBI" id="CHEBI:30616"/>
        <dbReference type="ChEBI" id="CHEBI:33019"/>
        <dbReference type="ChEBI" id="CHEBI:58315"/>
        <dbReference type="ChEBI" id="CHEBI:78442"/>
        <dbReference type="ChEBI" id="CHEBI:78536"/>
        <dbReference type="ChEBI" id="CHEBI:456215"/>
        <dbReference type="EC" id="6.1.1.1"/>
    </reaction>
</comment>
<comment type="subunit">
    <text evidence="1">Homodimer.</text>
</comment>
<comment type="subcellular location">
    <subcellularLocation>
        <location evidence="1">Cytoplasm</location>
    </subcellularLocation>
</comment>
<comment type="similarity">
    <text evidence="1">Belongs to the class-I aminoacyl-tRNA synthetase family. TyrS type 1 subfamily.</text>
</comment>
<dbReference type="EC" id="6.1.1.1" evidence="1"/>
<dbReference type="EMBL" id="CP000001">
    <property type="protein sequence ID" value="AAU15480.1"/>
    <property type="molecule type" value="Genomic_DNA"/>
</dbReference>
<dbReference type="RefSeq" id="WP_001021085.1">
    <property type="nucleotide sequence ID" value="NC_006274.1"/>
</dbReference>
<dbReference type="SMR" id="Q631P9"/>
<dbReference type="KEGG" id="bcz:BCE33L4797"/>
<dbReference type="PATRIC" id="fig|288681.22.peg.557"/>
<dbReference type="Proteomes" id="UP000002612">
    <property type="component" value="Chromosome"/>
</dbReference>
<dbReference type="GO" id="GO:0005829">
    <property type="term" value="C:cytosol"/>
    <property type="evidence" value="ECO:0007669"/>
    <property type="project" value="TreeGrafter"/>
</dbReference>
<dbReference type="GO" id="GO:0005524">
    <property type="term" value="F:ATP binding"/>
    <property type="evidence" value="ECO:0007669"/>
    <property type="project" value="UniProtKB-UniRule"/>
</dbReference>
<dbReference type="GO" id="GO:0003723">
    <property type="term" value="F:RNA binding"/>
    <property type="evidence" value="ECO:0007669"/>
    <property type="project" value="UniProtKB-KW"/>
</dbReference>
<dbReference type="GO" id="GO:0004831">
    <property type="term" value="F:tyrosine-tRNA ligase activity"/>
    <property type="evidence" value="ECO:0007669"/>
    <property type="project" value="UniProtKB-UniRule"/>
</dbReference>
<dbReference type="GO" id="GO:0006437">
    <property type="term" value="P:tyrosyl-tRNA aminoacylation"/>
    <property type="evidence" value="ECO:0007669"/>
    <property type="project" value="UniProtKB-UniRule"/>
</dbReference>
<dbReference type="CDD" id="cd00165">
    <property type="entry name" value="S4"/>
    <property type="match status" value="1"/>
</dbReference>
<dbReference type="CDD" id="cd00805">
    <property type="entry name" value="TyrRS_core"/>
    <property type="match status" value="1"/>
</dbReference>
<dbReference type="FunFam" id="1.10.240.10:FF:000001">
    <property type="entry name" value="Tyrosine--tRNA ligase"/>
    <property type="match status" value="1"/>
</dbReference>
<dbReference type="FunFam" id="3.40.50.620:FF:000008">
    <property type="entry name" value="Tyrosine--tRNA ligase"/>
    <property type="match status" value="1"/>
</dbReference>
<dbReference type="Gene3D" id="3.40.50.620">
    <property type="entry name" value="HUPs"/>
    <property type="match status" value="1"/>
</dbReference>
<dbReference type="Gene3D" id="3.10.290.10">
    <property type="entry name" value="RNA-binding S4 domain"/>
    <property type="match status" value="1"/>
</dbReference>
<dbReference type="Gene3D" id="1.10.240.10">
    <property type="entry name" value="Tyrosyl-Transfer RNA Synthetase"/>
    <property type="match status" value="1"/>
</dbReference>
<dbReference type="HAMAP" id="MF_02006">
    <property type="entry name" value="Tyr_tRNA_synth_type1"/>
    <property type="match status" value="1"/>
</dbReference>
<dbReference type="InterPro" id="IPR001412">
    <property type="entry name" value="aa-tRNA-synth_I_CS"/>
</dbReference>
<dbReference type="InterPro" id="IPR002305">
    <property type="entry name" value="aa-tRNA-synth_Ic"/>
</dbReference>
<dbReference type="InterPro" id="IPR014729">
    <property type="entry name" value="Rossmann-like_a/b/a_fold"/>
</dbReference>
<dbReference type="InterPro" id="IPR002942">
    <property type="entry name" value="S4_RNA-bd"/>
</dbReference>
<dbReference type="InterPro" id="IPR036986">
    <property type="entry name" value="S4_RNA-bd_sf"/>
</dbReference>
<dbReference type="InterPro" id="IPR054608">
    <property type="entry name" value="SYY-like_C"/>
</dbReference>
<dbReference type="InterPro" id="IPR002307">
    <property type="entry name" value="Tyr-tRNA-ligase"/>
</dbReference>
<dbReference type="InterPro" id="IPR024088">
    <property type="entry name" value="Tyr-tRNA-ligase_bac-type"/>
</dbReference>
<dbReference type="InterPro" id="IPR024107">
    <property type="entry name" value="Tyr-tRNA-ligase_bac_1"/>
</dbReference>
<dbReference type="NCBIfam" id="TIGR00234">
    <property type="entry name" value="tyrS"/>
    <property type="match status" value="1"/>
</dbReference>
<dbReference type="PANTHER" id="PTHR11766:SF0">
    <property type="entry name" value="TYROSINE--TRNA LIGASE, MITOCHONDRIAL"/>
    <property type="match status" value="1"/>
</dbReference>
<dbReference type="PANTHER" id="PTHR11766">
    <property type="entry name" value="TYROSYL-TRNA SYNTHETASE"/>
    <property type="match status" value="1"/>
</dbReference>
<dbReference type="Pfam" id="PF22421">
    <property type="entry name" value="SYY_C-terminal"/>
    <property type="match status" value="1"/>
</dbReference>
<dbReference type="Pfam" id="PF00579">
    <property type="entry name" value="tRNA-synt_1b"/>
    <property type="match status" value="1"/>
</dbReference>
<dbReference type="PRINTS" id="PR01040">
    <property type="entry name" value="TRNASYNTHTYR"/>
</dbReference>
<dbReference type="SMART" id="SM00363">
    <property type="entry name" value="S4"/>
    <property type="match status" value="1"/>
</dbReference>
<dbReference type="SUPFAM" id="SSF55174">
    <property type="entry name" value="Alpha-L RNA-binding motif"/>
    <property type="match status" value="1"/>
</dbReference>
<dbReference type="SUPFAM" id="SSF52374">
    <property type="entry name" value="Nucleotidylyl transferase"/>
    <property type="match status" value="1"/>
</dbReference>
<dbReference type="PROSITE" id="PS00178">
    <property type="entry name" value="AA_TRNA_LIGASE_I"/>
    <property type="match status" value="1"/>
</dbReference>
<dbReference type="PROSITE" id="PS50889">
    <property type="entry name" value="S4"/>
    <property type="match status" value="1"/>
</dbReference>